<comment type="function">
    <text evidence="1">An essential GTPase that binds both GDP and GTP, with rapid nucleotide exchange. Plays a role in 16S rRNA processing and 30S ribosomal subunit biogenesis and possibly also in cell cycle regulation and energy metabolism.</text>
</comment>
<comment type="subunit">
    <text evidence="1">Monomer.</text>
</comment>
<comment type="subcellular location">
    <subcellularLocation>
        <location>Cytoplasm</location>
    </subcellularLocation>
    <subcellularLocation>
        <location evidence="1">Cell inner membrane</location>
        <topology evidence="1">Peripheral membrane protein</topology>
    </subcellularLocation>
</comment>
<comment type="similarity">
    <text evidence="1 2">Belongs to the TRAFAC class TrmE-Era-EngA-EngB-Septin-like GTPase superfamily. Era GTPase family.</text>
</comment>
<proteinExistence type="inferred from homology"/>
<organism>
    <name type="scientific">Shigella flexneri</name>
    <dbReference type="NCBI Taxonomy" id="623"/>
    <lineage>
        <taxon>Bacteria</taxon>
        <taxon>Pseudomonadati</taxon>
        <taxon>Pseudomonadota</taxon>
        <taxon>Gammaproteobacteria</taxon>
        <taxon>Enterobacterales</taxon>
        <taxon>Enterobacteriaceae</taxon>
        <taxon>Shigella</taxon>
    </lineage>
</organism>
<keyword id="KW-0997">Cell inner membrane</keyword>
<keyword id="KW-1003">Cell membrane</keyword>
<keyword id="KW-0963">Cytoplasm</keyword>
<keyword id="KW-0342">GTP-binding</keyword>
<keyword id="KW-0472">Membrane</keyword>
<keyword id="KW-0547">Nucleotide-binding</keyword>
<keyword id="KW-1185">Reference proteome</keyword>
<keyword id="KW-0690">Ribosome biogenesis</keyword>
<keyword id="KW-0694">RNA-binding</keyword>
<keyword id="KW-0699">rRNA-binding</keyword>
<dbReference type="EMBL" id="AE005674">
    <property type="protein sequence ID" value="AAN44125.1"/>
    <property type="molecule type" value="Genomic_DNA"/>
</dbReference>
<dbReference type="EMBL" id="AE014073">
    <property type="protein sequence ID" value="AAP17949.1"/>
    <property type="molecule type" value="Genomic_DNA"/>
</dbReference>
<dbReference type="RefSeq" id="NP_708418.1">
    <property type="nucleotide sequence ID" value="NC_004337.2"/>
</dbReference>
<dbReference type="RefSeq" id="WP_000020747.1">
    <property type="nucleotide sequence ID" value="NZ_WPGW01000044.1"/>
</dbReference>
<dbReference type="SMR" id="Q83QI5"/>
<dbReference type="STRING" id="198214.SF2628"/>
<dbReference type="PaxDb" id="198214-SF2628"/>
<dbReference type="GeneID" id="1025663"/>
<dbReference type="KEGG" id="sfl:SF2628"/>
<dbReference type="KEGG" id="sfx:S2801"/>
<dbReference type="PATRIC" id="fig|198214.7.peg.3136"/>
<dbReference type="HOGENOM" id="CLU_038009_1_2_6"/>
<dbReference type="Proteomes" id="UP000001006">
    <property type="component" value="Chromosome"/>
</dbReference>
<dbReference type="Proteomes" id="UP000002673">
    <property type="component" value="Chromosome"/>
</dbReference>
<dbReference type="GO" id="GO:0005829">
    <property type="term" value="C:cytosol"/>
    <property type="evidence" value="ECO:0007669"/>
    <property type="project" value="TreeGrafter"/>
</dbReference>
<dbReference type="GO" id="GO:0005886">
    <property type="term" value="C:plasma membrane"/>
    <property type="evidence" value="ECO:0007669"/>
    <property type="project" value="UniProtKB-SubCell"/>
</dbReference>
<dbReference type="GO" id="GO:0005525">
    <property type="term" value="F:GTP binding"/>
    <property type="evidence" value="ECO:0007669"/>
    <property type="project" value="UniProtKB-UniRule"/>
</dbReference>
<dbReference type="GO" id="GO:0003924">
    <property type="term" value="F:GTPase activity"/>
    <property type="evidence" value="ECO:0007669"/>
    <property type="project" value="UniProtKB-UniRule"/>
</dbReference>
<dbReference type="GO" id="GO:0043024">
    <property type="term" value="F:ribosomal small subunit binding"/>
    <property type="evidence" value="ECO:0007669"/>
    <property type="project" value="TreeGrafter"/>
</dbReference>
<dbReference type="GO" id="GO:0070181">
    <property type="term" value="F:small ribosomal subunit rRNA binding"/>
    <property type="evidence" value="ECO:0007669"/>
    <property type="project" value="UniProtKB-UniRule"/>
</dbReference>
<dbReference type="GO" id="GO:0000028">
    <property type="term" value="P:ribosomal small subunit assembly"/>
    <property type="evidence" value="ECO:0007669"/>
    <property type="project" value="TreeGrafter"/>
</dbReference>
<dbReference type="CDD" id="cd04163">
    <property type="entry name" value="Era"/>
    <property type="match status" value="1"/>
</dbReference>
<dbReference type="CDD" id="cd22534">
    <property type="entry name" value="KH-II_Era"/>
    <property type="match status" value="1"/>
</dbReference>
<dbReference type="FunFam" id="3.30.300.20:FF:000003">
    <property type="entry name" value="GTPase Era"/>
    <property type="match status" value="1"/>
</dbReference>
<dbReference type="FunFam" id="3.40.50.300:FF:000094">
    <property type="entry name" value="GTPase Era"/>
    <property type="match status" value="1"/>
</dbReference>
<dbReference type="Gene3D" id="3.30.300.20">
    <property type="match status" value="1"/>
</dbReference>
<dbReference type="Gene3D" id="3.40.50.300">
    <property type="entry name" value="P-loop containing nucleotide triphosphate hydrolases"/>
    <property type="match status" value="1"/>
</dbReference>
<dbReference type="HAMAP" id="MF_00367">
    <property type="entry name" value="GTPase_Era"/>
    <property type="match status" value="1"/>
</dbReference>
<dbReference type="InterPro" id="IPR030388">
    <property type="entry name" value="G_ERA_dom"/>
</dbReference>
<dbReference type="InterPro" id="IPR006073">
    <property type="entry name" value="GTP-bd"/>
</dbReference>
<dbReference type="InterPro" id="IPR005662">
    <property type="entry name" value="GTPase_Era-like"/>
</dbReference>
<dbReference type="InterPro" id="IPR015946">
    <property type="entry name" value="KH_dom-like_a/b"/>
</dbReference>
<dbReference type="InterPro" id="IPR004044">
    <property type="entry name" value="KH_dom_type_2"/>
</dbReference>
<dbReference type="InterPro" id="IPR009019">
    <property type="entry name" value="KH_sf_prok-type"/>
</dbReference>
<dbReference type="InterPro" id="IPR027417">
    <property type="entry name" value="P-loop_NTPase"/>
</dbReference>
<dbReference type="InterPro" id="IPR005225">
    <property type="entry name" value="Small_GTP-bd"/>
</dbReference>
<dbReference type="NCBIfam" id="TIGR00436">
    <property type="entry name" value="era"/>
    <property type="match status" value="1"/>
</dbReference>
<dbReference type="NCBIfam" id="NF000908">
    <property type="entry name" value="PRK00089.1"/>
    <property type="match status" value="1"/>
</dbReference>
<dbReference type="NCBIfam" id="TIGR00231">
    <property type="entry name" value="small_GTP"/>
    <property type="match status" value="1"/>
</dbReference>
<dbReference type="PANTHER" id="PTHR42698">
    <property type="entry name" value="GTPASE ERA"/>
    <property type="match status" value="1"/>
</dbReference>
<dbReference type="PANTHER" id="PTHR42698:SF1">
    <property type="entry name" value="GTPASE ERA, MITOCHONDRIAL"/>
    <property type="match status" value="1"/>
</dbReference>
<dbReference type="Pfam" id="PF07650">
    <property type="entry name" value="KH_2"/>
    <property type="match status" value="1"/>
</dbReference>
<dbReference type="Pfam" id="PF01926">
    <property type="entry name" value="MMR_HSR1"/>
    <property type="match status" value="1"/>
</dbReference>
<dbReference type="SUPFAM" id="SSF52540">
    <property type="entry name" value="P-loop containing nucleoside triphosphate hydrolases"/>
    <property type="match status" value="1"/>
</dbReference>
<dbReference type="SUPFAM" id="SSF54814">
    <property type="entry name" value="Prokaryotic type KH domain (KH-domain type II)"/>
    <property type="match status" value="1"/>
</dbReference>
<dbReference type="PROSITE" id="PS51713">
    <property type="entry name" value="G_ERA"/>
    <property type="match status" value="1"/>
</dbReference>
<dbReference type="PROSITE" id="PS50823">
    <property type="entry name" value="KH_TYPE_2"/>
    <property type="match status" value="1"/>
</dbReference>
<accession>Q83QI5</accession>
<accession>Q7C0E6</accession>
<sequence>MSIDKSYCGFIAIVGRPNVGKSTLLNKLLGQKISITSRKAQTTRHRIVGIHTEGAYQAIYVDTPGLHMEEKRAINRLMNKAASSSIGDVELVIFVVEGTRWTPDDEMVLNKLREGKAPVILAVNKVDNVQEKADLLPHLQFLASQMNFLDIVPISAETGLNVDTIAAIVRKHLPEATHHFPEDYITDRSQRFMASEIIREKLMRFLGAELPYSVTVEIERFVSNERGGCDINGLILVEREGQKKMVIGNKGAKIKTIGIEARKDMQEMFEAPVHLELWVKVKSGWADDERALRSLGYVDDL</sequence>
<protein>
    <recommendedName>
        <fullName evidence="1">GTPase Era</fullName>
    </recommendedName>
</protein>
<evidence type="ECO:0000255" key="1">
    <source>
        <dbReference type="HAMAP-Rule" id="MF_00367"/>
    </source>
</evidence>
<evidence type="ECO:0000255" key="2">
    <source>
        <dbReference type="PROSITE-ProRule" id="PRU01050"/>
    </source>
</evidence>
<reference key="1">
    <citation type="journal article" date="2002" name="Nucleic Acids Res.">
        <title>Genome sequence of Shigella flexneri 2a: insights into pathogenicity through comparison with genomes of Escherichia coli K12 and O157.</title>
        <authorList>
            <person name="Jin Q."/>
            <person name="Yuan Z."/>
            <person name="Xu J."/>
            <person name="Wang Y."/>
            <person name="Shen Y."/>
            <person name="Lu W."/>
            <person name="Wang J."/>
            <person name="Liu H."/>
            <person name="Yang J."/>
            <person name="Yang F."/>
            <person name="Zhang X."/>
            <person name="Zhang J."/>
            <person name="Yang G."/>
            <person name="Wu H."/>
            <person name="Qu D."/>
            <person name="Dong J."/>
            <person name="Sun L."/>
            <person name="Xue Y."/>
            <person name="Zhao A."/>
            <person name="Gao Y."/>
            <person name="Zhu J."/>
            <person name="Kan B."/>
            <person name="Ding K."/>
            <person name="Chen S."/>
            <person name="Cheng H."/>
            <person name="Yao Z."/>
            <person name="He B."/>
            <person name="Chen R."/>
            <person name="Ma D."/>
            <person name="Qiang B."/>
            <person name="Wen Y."/>
            <person name="Hou Y."/>
            <person name="Yu J."/>
        </authorList>
    </citation>
    <scope>NUCLEOTIDE SEQUENCE [LARGE SCALE GENOMIC DNA]</scope>
    <source>
        <strain>301 / Serotype 2a</strain>
    </source>
</reference>
<reference key="2">
    <citation type="journal article" date="2003" name="Infect. Immun.">
        <title>Complete genome sequence and comparative genomics of Shigella flexneri serotype 2a strain 2457T.</title>
        <authorList>
            <person name="Wei J."/>
            <person name="Goldberg M.B."/>
            <person name="Burland V."/>
            <person name="Venkatesan M.M."/>
            <person name="Deng W."/>
            <person name="Fournier G."/>
            <person name="Mayhew G.F."/>
            <person name="Plunkett G. III"/>
            <person name="Rose D.J."/>
            <person name="Darling A."/>
            <person name="Mau B."/>
            <person name="Perna N.T."/>
            <person name="Payne S.M."/>
            <person name="Runyen-Janecky L.J."/>
            <person name="Zhou S."/>
            <person name="Schwartz D.C."/>
            <person name="Blattner F.R."/>
        </authorList>
    </citation>
    <scope>NUCLEOTIDE SEQUENCE [LARGE SCALE GENOMIC DNA]</scope>
    <source>
        <strain>ATCC 700930 / 2457T / Serotype 2a</strain>
    </source>
</reference>
<gene>
    <name evidence="1" type="primary">era</name>
    <name type="ordered locus">SF2628</name>
    <name type="ordered locus">S2801</name>
</gene>
<feature type="chain" id="PRO_1000079737" description="GTPase Era">
    <location>
        <begin position="1"/>
        <end position="301"/>
    </location>
</feature>
<feature type="domain" description="Era-type G" evidence="2">
    <location>
        <begin position="7"/>
        <end position="175"/>
    </location>
</feature>
<feature type="domain" description="KH type-2" evidence="1">
    <location>
        <begin position="206"/>
        <end position="283"/>
    </location>
</feature>
<feature type="region of interest" description="G1" evidence="2">
    <location>
        <begin position="15"/>
        <end position="22"/>
    </location>
</feature>
<feature type="region of interest" description="G2" evidence="2">
    <location>
        <begin position="41"/>
        <end position="45"/>
    </location>
</feature>
<feature type="region of interest" description="G3" evidence="2">
    <location>
        <begin position="62"/>
        <end position="65"/>
    </location>
</feature>
<feature type="region of interest" description="G4" evidence="2">
    <location>
        <begin position="124"/>
        <end position="127"/>
    </location>
</feature>
<feature type="region of interest" description="G5" evidence="2">
    <location>
        <begin position="154"/>
        <end position="156"/>
    </location>
</feature>
<feature type="binding site" evidence="1">
    <location>
        <begin position="15"/>
        <end position="22"/>
    </location>
    <ligand>
        <name>GTP</name>
        <dbReference type="ChEBI" id="CHEBI:37565"/>
    </ligand>
</feature>
<feature type="binding site" evidence="1">
    <location>
        <begin position="62"/>
        <end position="66"/>
    </location>
    <ligand>
        <name>GTP</name>
        <dbReference type="ChEBI" id="CHEBI:37565"/>
    </ligand>
</feature>
<feature type="binding site" evidence="1">
    <location>
        <begin position="124"/>
        <end position="127"/>
    </location>
    <ligand>
        <name>GTP</name>
        <dbReference type="ChEBI" id="CHEBI:37565"/>
    </ligand>
</feature>
<name>ERA_SHIFL</name>